<accession>Q042N0</accession>
<comment type="function">
    <text evidence="1">Catalyzes the ATP-dependent transfer of a sulfur to tRNA to produce 4-thiouridine in position 8 of tRNAs, which functions as a near-UV photosensor. Also catalyzes the transfer of sulfur to the sulfur carrier protein ThiS, forming ThiS-thiocarboxylate. This is a step in the synthesis of thiazole, in the thiamine biosynthesis pathway. The sulfur is donated as persulfide by IscS.</text>
</comment>
<comment type="catalytic activity">
    <reaction evidence="1">
        <text>[ThiI sulfur-carrier protein]-S-sulfanyl-L-cysteine + a uridine in tRNA + 2 reduced [2Fe-2S]-[ferredoxin] + ATP + H(+) = [ThiI sulfur-carrier protein]-L-cysteine + a 4-thiouridine in tRNA + 2 oxidized [2Fe-2S]-[ferredoxin] + AMP + diphosphate</text>
        <dbReference type="Rhea" id="RHEA:24176"/>
        <dbReference type="Rhea" id="RHEA-COMP:10000"/>
        <dbReference type="Rhea" id="RHEA-COMP:10001"/>
        <dbReference type="Rhea" id="RHEA-COMP:13337"/>
        <dbReference type="Rhea" id="RHEA-COMP:13338"/>
        <dbReference type="Rhea" id="RHEA-COMP:13339"/>
        <dbReference type="Rhea" id="RHEA-COMP:13340"/>
        <dbReference type="ChEBI" id="CHEBI:15378"/>
        <dbReference type="ChEBI" id="CHEBI:29950"/>
        <dbReference type="ChEBI" id="CHEBI:30616"/>
        <dbReference type="ChEBI" id="CHEBI:33019"/>
        <dbReference type="ChEBI" id="CHEBI:33737"/>
        <dbReference type="ChEBI" id="CHEBI:33738"/>
        <dbReference type="ChEBI" id="CHEBI:61963"/>
        <dbReference type="ChEBI" id="CHEBI:65315"/>
        <dbReference type="ChEBI" id="CHEBI:136798"/>
        <dbReference type="ChEBI" id="CHEBI:456215"/>
        <dbReference type="EC" id="2.8.1.4"/>
    </reaction>
</comment>
<comment type="catalytic activity">
    <reaction evidence="1">
        <text>[ThiS sulfur-carrier protein]-C-terminal Gly-Gly-AMP + S-sulfanyl-L-cysteinyl-[cysteine desulfurase] + AH2 = [ThiS sulfur-carrier protein]-C-terminal-Gly-aminoethanethioate + L-cysteinyl-[cysteine desulfurase] + A + AMP + 2 H(+)</text>
        <dbReference type="Rhea" id="RHEA:43340"/>
        <dbReference type="Rhea" id="RHEA-COMP:12157"/>
        <dbReference type="Rhea" id="RHEA-COMP:12158"/>
        <dbReference type="Rhea" id="RHEA-COMP:12910"/>
        <dbReference type="Rhea" id="RHEA-COMP:19908"/>
        <dbReference type="ChEBI" id="CHEBI:13193"/>
        <dbReference type="ChEBI" id="CHEBI:15378"/>
        <dbReference type="ChEBI" id="CHEBI:17499"/>
        <dbReference type="ChEBI" id="CHEBI:29950"/>
        <dbReference type="ChEBI" id="CHEBI:61963"/>
        <dbReference type="ChEBI" id="CHEBI:90618"/>
        <dbReference type="ChEBI" id="CHEBI:232372"/>
        <dbReference type="ChEBI" id="CHEBI:456215"/>
    </reaction>
</comment>
<comment type="pathway">
    <text evidence="1">Cofactor biosynthesis; thiamine diphosphate biosynthesis.</text>
</comment>
<comment type="subcellular location">
    <subcellularLocation>
        <location evidence="1">Cytoplasm</location>
    </subcellularLocation>
</comment>
<comment type="similarity">
    <text evidence="1">Belongs to the ThiI family.</text>
</comment>
<proteinExistence type="inferred from homology"/>
<evidence type="ECO:0000255" key="1">
    <source>
        <dbReference type="HAMAP-Rule" id="MF_00021"/>
    </source>
</evidence>
<reference key="1">
    <citation type="journal article" date="2006" name="Proc. Natl. Acad. Sci. U.S.A.">
        <title>Comparative genomics of the lactic acid bacteria.</title>
        <authorList>
            <person name="Makarova K.S."/>
            <person name="Slesarev A."/>
            <person name="Wolf Y.I."/>
            <person name="Sorokin A."/>
            <person name="Mirkin B."/>
            <person name="Koonin E.V."/>
            <person name="Pavlov A."/>
            <person name="Pavlova N."/>
            <person name="Karamychev V."/>
            <person name="Polouchine N."/>
            <person name="Shakhova V."/>
            <person name="Grigoriev I."/>
            <person name="Lou Y."/>
            <person name="Rohksar D."/>
            <person name="Lucas S."/>
            <person name="Huang K."/>
            <person name="Goodstein D.M."/>
            <person name="Hawkins T."/>
            <person name="Plengvidhya V."/>
            <person name="Welker D."/>
            <person name="Hughes J."/>
            <person name="Goh Y."/>
            <person name="Benson A."/>
            <person name="Baldwin K."/>
            <person name="Lee J.-H."/>
            <person name="Diaz-Muniz I."/>
            <person name="Dosti B."/>
            <person name="Smeianov V."/>
            <person name="Wechter W."/>
            <person name="Barabote R."/>
            <person name="Lorca G."/>
            <person name="Altermann E."/>
            <person name="Barrangou R."/>
            <person name="Ganesan B."/>
            <person name="Xie Y."/>
            <person name="Rawsthorne H."/>
            <person name="Tamir D."/>
            <person name="Parker C."/>
            <person name="Breidt F."/>
            <person name="Broadbent J.R."/>
            <person name="Hutkins R."/>
            <person name="O'Sullivan D."/>
            <person name="Steele J."/>
            <person name="Unlu G."/>
            <person name="Saier M.H. Jr."/>
            <person name="Klaenhammer T."/>
            <person name="Richardson P."/>
            <person name="Kozyavkin S."/>
            <person name="Weimer B.C."/>
            <person name="Mills D.A."/>
        </authorList>
    </citation>
    <scope>NUCLEOTIDE SEQUENCE [LARGE SCALE GENOMIC DNA]</scope>
    <source>
        <strain>ATCC 33323 / DSM 20243 / BCRC 14619 / CIP 102991 / JCM 1131 / KCTC 3163 / NCIMB 11718 / NCTC 13722 / AM63</strain>
    </source>
</reference>
<feature type="chain" id="PRO_1000074236" description="Probable tRNA sulfurtransferase">
    <location>
        <begin position="1"/>
        <end position="405"/>
    </location>
</feature>
<feature type="domain" description="THUMP" evidence="1">
    <location>
        <begin position="60"/>
        <end position="165"/>
    </location>
</feature>
<feature type="binding site" evidence="1">
    <location>
        <begin position="183"/>
        <end position="184"/>
    </location>
    <ligand>
        <name>ATP</name>
        <dbReference type="ChEBI" id="CHEBI:30616"/>
    </ligand>
</feature>
<feature type="binding site" evidence="1">
    <location>
        <begin position="208"/>
        <end position="209"/>
    </location>
    <ligand>
        <name>ATP</name>
        <dbReference type="ChEBI" id="CHEBI:30616"/>
    </ligand>
</feature>
<feature type="binding site" evidence="1">
    <location>
        <position position="265"/>
    </location>
    <ligand>
        <name>ATP</name>
        <dbReference type="ChEBI" id="CHEBI:30616"/>
    </ligand>
</feature>
<feature type="binding site" evidence="1">
    <location>
        <position position="287"/>
    </location>
    <ligand>
        <name>ATP</name>
        <dbReference type="ChEBI" id="CHEBI:30616"/>
    </ligand>
</feature>
<feature type="binding site" evidence="1">
    <location>
        <position position="296"/>
    </location>
    <ligand>
        <name>ATP</name>
        <dbReference type="ChEBI" id="CHEBI:30616"/>
    </ligand>
</feature>
<name>THII_LACGA</name>
<dbReference type="EC" id="2.8.1.4" evidence="1"/>
<dbReference type="EMBL" id="CP000413">
    <property type="protein sequence ID" value="ABJ60592.1"/>
    <property type="molecule type" value="Genomic_DNA"/>
</dbReference>
<dbReference type="RefSeq" id="WP_003647086.1">
    <property type="nucleotide sequence ID" value="NZ_WBMG01000002.1"/>
</dbReference>
<dbReference type="SMR" id="Q042N0"/>
<dbReference type="GeneID" id="29639213"/>
<dbReference type="KEGG" id="lga:LGAS_1223"/>
<dbReference type="HOGENOM" id="CLU_037952_4_0_9"/>
<dbReference type="BioCyc" id="LGAS324831:G1G6Y-1219-MONOMER"/>
<dbReference type="UniPathway" id="UPA00060"/>
<dbReference type="Proteomes" id="UP000000664">
    <property type="component" value="Chromosome"/>
</dbReference>
<dbReference type="GO" id="GO:0005829">
    <property type="term" value="C:cytosol"/>
    <property type="evidence" value="ECO:0007669"/>
    <property type="project" value="TreeGrafter"/>
</dbReference>
<dbReference type="GO" id="GO:0005524">
    <property type="term" value="F:ATP binding"/>
    <property type="evidence" value="ECO:0007669"/>
    <property type="project" value="UniProtKB-UniRule"/>
</dbReference>
<dbReference type="GO" id="GO:0004810">
    <property type="term" value="F:CCA tRNA nucleotidyltransferase activity"/>
    <property type="evidence" value="ECO:0007669"/>
    <property type="project" value="InterPro"/>
</dbReference>
<dbReference type="GO" id="GO:0000049">
    <property type="term" value="F:tRNA binding"/>
    <property type="evidence" value="ECO:0007669"/>
    <property type="project" value="UniProtKB-UniRule"/>
</dbReference>
<dbReference type="GO" id="GO:0140741">
    <property type="term" value="F:tRNA-uracil-4 sulfurtransferase activity"/>
    <property type="evidence" value="ECO:0007669"/>
    <property type="project" value="UniProtKB-EC"/>
</dbReference>
<dbReference type="GO" id="GO:0009228">
    <property type="term" value="P:thiamine biosynthetic process"/>
    <property type="evidence" value="ECO:0007669"/>
    <property type="project" value="UniProtKB-KW"/>
</dbReference>
<dbReference type="GO" id="GO:0009229">
    <property type="term" value="P:thiamine diphosphate biosynthetic process"/>
    <property type="evidence" value="ECO:0007669"/>
    <property type="project" value="UniProtKB-UniRule"/>
</dbReference>
<dbReference type="GO" id="GO:0052837">
    <property type="term" value="P:thiazole biosynthetic process"/>
    <property type="evidence" value="ECO:0007669"/>
    <property type="project" value="TreeGrafter"/>
</dbReference>
<dbReference type="GO" id="GO:0002937">
    <property type="term" value="P:tRNA 4-thiouridine biosynthesis"/>
    <property type="evidence" value="ECO:0007669"/>
    <property type="project" value="TreeGrafter"/>
</dbReference>
<dbReference type="CDD" id="cd01712">
    <property type="entry name" value="PPase_ThiI"/>
    <property type="match status" value="1"/>
</dbReference>
<dbReference type="CDD" id="cd11716">
    <property type="entry name" value="THUMP_ThiI"/>
    <property type="match status" value="1"/>
</dbReference>
<dbReference type="FunFam" id="3.40.50.620:FF:000053">
    <property type="entry name" value="Probable tRNA sulfurtransferase"/>
    <property type="match status" value="1"/>
</dbReference>
<dbReference type="Gene3D" id="3.30.2130.30">
    <property type="match status" value="1"/>
</dbReference>
<dbReference type="Gene3D" id="3.40.50.620">
    <property type="entry name" value="HUPs"/>
    <property type="match status" value="1"/>
</dbReference>
<dbReference type="HAMAP" id="MF_00021">
    <property type="entry name" value="ThiI"/>
    <property type="match status" value="1"/>
</dbReference>
<dbReference type="InterPro" id="IPR014729">
    <property type="entry name" value="Rossmann-like_a/b/a_fold"/>
</dbReference>
<dbReference type="InterPro" id="IPR020536">
    <property type="entry name" value="ThiI_AANH"/>
</dbReference>
<dbReference type="InterPro" id="IPR054173">
    <property type="entry name" value="ThiI_fer"/>
</dbReference>
<dbReference type="InterPro" id="IPR049961">
    <property type="entry name" value="ThiI_N"/>
</dbReference>
<dbReference type="InterPro" id="IPR004114">
    <property type="entry name" value="THUMP_dom"/>
</dbReference>
<dbReference type="InterPro" id="IPR049962">
    <property type="entry name" value="THUMP_ThiI"/>
</dbReference>
<dbReference type="InterPro" id="IPR003720">
    <property type="entry name" value="tRNA_STrfase"/>
</dbReference>
<dbReference type="InterPro" id="IPR050102">
    <property type="entry name" value="tRNA_sulfurtransferase_ThiI"/>
</dbReference>
<dbReference type="NCBIfam" id="TIGR00342">
    <property type="entry name" value="tRNA uracil 4-sulfurtransferase ThiI"/>
    <property type="match status" value="1"/>
</dbReference>
<dbReference type="PANTHER" id="PTHR43209">
    <property type="entry name" value="TRNA SULFURTRANSFERASE"/>
    <property type="match status" value="1"/>
</dbReference>
<dbReference type="PANTHER" id="PTHR43209:SF1">
    <property type="entry name" value="TRNA SULFURTRANSFERASE"/>
    <property type="match status" value="1"/>
</dbReference>
<dbReference type="Pfam" id="PF02568">
    <property type="entry name" value="ThiI"/>
    <property type="match status" value="1"/>
</dbReference>
<dbReference type="Pfam" id="PF22025">
    <property type="entry name" value="ThiI_fer"/>
    <property type="match status" value="1"/>
</dbReference>
<dbReference type="Pfam" id="PF02926">
    <property type="entry name" value="THUMP"/>
    <property type="match status" value="1"/>
</dbReference>
<dbReference type="SMART" id="SM00981">
    <property type="entry name" value="THUMP"/>
    <property type="match status" value="1"/>
</dbReference>
<dbReference type="SUPFAM" id="SSF52402">
    <property type="entry name" value="Adenine nucleotide alpha hydrolases-like"/>
    <property type="match status" value="1"/>
</dbReference>
<dbReference type="SUPFAM" id="SSF143437">
    <property type="entry name" value="THUMP domain-like"/>
    <property type="match status" value="1"/>
</dbReference>
<dbReference type="PROSITE" id="PS51165">
    <property type="entry name" value="THUMP"/>
    <property type="match status" value="1"/>
</dbReference>
<sequence>MQYTEVMVRYGELSTKGKNRKDFIGRLAGNVTRALQDFPEIEIHPKHDRMHIVLNGAPFDKIDQRLKLVFGIQTYSPTIKVEKNLDAIKKASLELMQATFKDGMTFKVNTRRSDHEFEYDTNQLNTMIGDYLFDNMDNLKVKMKKPDLVLRIEVRQDAIYISNQLLHGAGGMPVGTAGRAVMMLSGGIDSPVASYLAMKRGVEIDMVHFFSPPYTTEKALAKAKELTGILANYSGKINFIAVPFTEIQEQIKEKLPEGYLMTIQRRFMLQLADRIRAKRGGLAIFNGESVGQVASQTLESMVAINDVTSTPVLRPVATMDKTEIIKLAEQIGTFDLSIEPFEDCCTIFAPPRPKTKPKLDEARKLENRLDAEKMIQRAIDGMKITPIYPNQKFLDDKAQEDADLL</sequence>
<keyword id="KW-0067">ATP-binding</keyword>
<keyword id="KW-0963">Cytoplasm</keyword>
<keyword id="KW-0547">Nucleotide-binding</keyword>
<keyword id="KW-0694">RNA-binding</keyword>
<keyword id="KW-0784">Thiamine biosynthesis</keyword>
<keyword id="KW-0808">Transferase</keyword>
<keyword id="KW-0820">tRNA-binding</keyword>
<gene>
    <name evidence="1" type="primary">thiI</name>
    <name type="ordered locus">LGAS_1223</name>
</gene>
<organism>
    <name type="scientific">Lactobacillus gasseri (strain ATCC 33323 / DSM 20243 / BCRC 14619 / CIP 102991 / JCM 1131 / KCTC 3163 / NCIMB 11718 / NCTC 13722 / AM63)</name>
    <dbReference type="NCBI Taxonomy" id="324831"/>
    <lineage>
        <taxon>Bacteria</taxon>
        <taxon>Bacillati</taxon>
        <taxon>Bacillota</taxon>
        <taxon>Bacilli</taxon>
        <taxon>Lactobacillales</taxon>
        <taxon>Lactobacillaceae</taxon>
        <taxon>Lactobacillus</taxon>
    </lineage>
</organism>
<protein>
    <recommendedName>
        <fullName evidence="1">Probable tRNA sulfurtransferase</fullName>
        <ecNumber evidence="1">2.8.1.4</ecNumber>
    </recommendedName>
    <alternativeName>
        <fullName evidence="1">Sulfur carrier protein ThiS sulfurtransferase</fullName>
    </alternativeName>
    <alternativeName>
        <fullName evidence="1">Thiamine biosynthesis protein ThiI</fullName>
    </alternativeName>
    <alternativeName>
        <fullName evidence="1">tRNA 4-thiouridine synthase</fullName>
    </alternativeName>
</protein>